<feature type="chain" id="PRO_0000080293" description="Capsular polysaccharide biosynthesis glycosyltransferase CapH">
    <location>
        <begin position="1"/>
        <end position="355"/>
    </location>
</feature>
<sequence>MIKVMHIFSRMNRGGAELRTMDTMKLLNREFEFHVCATSGKRGELDDELESMGITIHYLDIKKFSFPFKFIKLLKKKNIDVVHSHILFMSGLIQLLSFSANVRNRITHFRTSKDSKEQYNKIRKARNKVLKAIIEIFSTKILYVSNIANRNLISMKLFPKKHKTIYNGFEISNINKNFKKEENSFIYVGRFIHTKNQLFLLDVIEILKKEFNTNIEITFVGNIQTDYGKKFLSIANERGLNKNIKVIGEVNNPLDYLKTSEYFLFPSELEGLPGALIEAHHHNCIVISSNIKENSEVNQYFKDSSFELELIPKTWASTIKKLISRKKHISFNDSNVFDINMTTQELKEIYMSKTL</sequence>
<keyword id="KW-0972">Capsule biogenesis/degradation</keyword>
<keyword id="KW-0270">Exopolysaccharide synthesis</keyword>
<keyword id="KW-0328">Glycosyltransferase</keyword>
<keyword id="KW-0808">Transferase</keyword>
<reference key="1">
    <citation type="journal article" date="1994" name="J. Bacteriol.">
        <title>Sequence analysis and molecular characterization of genes required for the biosynthesis of type 1 capsular polysaccharide in Staphylococcus aureus.</title>
        <authorList>
            <person name="Lin W.S."/>
            <person name="Cunneen T."/>
            <person name="Lee C.Y."/>
        </authorList>
    </citation>
    <scope>NUCLEOTIDE SEQUENCE [GENOMIC DNA]</scope>
    <source>
        <strain>ATCC 49951 / M / NCTC 10649</strain>
    </source>
</reference>
<name>CAPH_STAAU</name>
<protein>
    <recommendedName>
        <fullName>Capsular polysaccharide biosynthesis glycosyltransferase CapH</fullName>
        <ecNumber>2.4.-.-</ecNumber>
    </recommendedName>
</protein>
<dbReference type="EC" id="2.4.-.-"/>
<dbReference type="EMBL" id="U10927">
    <property type="protein sequence ID" value="AAA64647.1"/>
    <property type="molecule type" value="Genomic_DNA"/>
</dbReference>
<dbReference type="SMR" id="P39857"/>
<dbReference type="CAZy" id="GT4">
    <property type="family name" value="Glycosyltransferase Family 4"/>
</dbReference>
<dbReference type="UniPathway" id="UPA00934"/>
<dbReference type="GO" id="GO:0016757">
    <property type="term" value="F:glycosyltransferase activity"/>
    <property type="evidence" value="ECO:0007669"/>
    <property type="project" value="UniProtKB-KW"/>
</dbReference>
<dbReference type="GO" id="GO:0045227">
    <property type="term" value="P:capsule polysaccharide biosynthetic process"/>
    <property type="evidence" value="ECO:0007669"/>
    <property type="project" value="UniProtKB-UniPathway"/>
</dbReference>
<dbReference type="CDD" id="cd03812">
    <property type="entry name" value="GT4_CapH-like"/>
    <property type="match status" value="1"/>
</dbReference>
<dbReference type="Gene3D" id="3.40.50.2000">
    <property type="entry name" value="Glycogen Phosphorylase B"/>
    <property type="match status" value="2"/>
</dbReference>
<dbReference type="InterPro" id="IPR001296">
    <property type="entry name" value="Glyco_trans_1"/>
</dbReference>
<dbReference type="InterPro" id="IPR028098">
    <property type="entry name" value="Glyco_trans_4-like_N"/>
</dbReference>
<dbReference type="PANTHER" id="PTHR46401">
    <property type="entry name" value="GLYCOSYLTRANSFERASE WBBK-RELATED"/>
    <property type="match status" value="1"/>
</dbReference>
<dbReference type="PANTHER" id="PTHR46401:SF2">
    <property type="entry name" value="GLYCOSYLTRANSFERASE WBBK-RELATED"/>
    <property type="match status" value="1"/>
</dbReference>
<dbReference type="Pfam" id="PF13439">
    <property type="entry name" value="Glyco_transf_4"/>
    <property type="match status" value="1"/>
</dbReference>
<dbReference type="Pfam" id="PF00534">
    <property type="entry name" value="Glycos_transf_1"/>
    <property type="match status" value="1"/>
</dbReference>
<dbReference type="SUPFAM" id="SSF53756">
    <property type="entry name" value="UDP-Glycosyltransferase/glycogen phosphorylase"/>
    <property type="match status" value="1"/>
</dbReference>
<comment type="function">
    <text>Required for the biosynthesis of type 1 capsular polysaccharide.</text>
</comment>
<comment type="pathway">
    <text>Capsule biogenesis; capsule polysaccharide biosynthesis.</text>
</comment>
<comment type="similarity">
    <text evidence="1">Belongs to the glycosyltransferase group 1 family. Glycosyltransferase 4 subfamily.</text>
</comment>
<gene>
    <name type="primary">capH</name>
</gene>
<organism>
    <name type="scientific">Staphylococcus aureus</name>
    <dbReference type="NCBI Taxonomy" id="1280"/>
    <lineage>
        <taxon>Bacteria</taxon>
        <taxon>Bacillati</taxon>
        <taxon>Bacillota</taxon>
        <taxon>Bacilli</taxon>
        <taxon>Bacillales</taxon>
        <taxon>Staphylococcaceae</taxon>
        <taxon>Staphylococcus</taxon>
    </lineage>
</organism>
<evidence type="ECO:0000305" key="1"/>
<accession>P39857</accession>
<proteinExistence type="inferred from homology"/>